<sequence length="170" mass="19074">MKTIEVDDQIYRYIASRTLHIGESASDILRRLLALPLDTEPTVALGHEANAEQTDEVSTDVLTMLLDNAQLAKEESAIARFMLILSALYRSQPDAFRHAADIKGRKRIYFAEDPQALLDNGKTTKPKPVPETPYWVITNTNTGRKRLIIEQLMQAMGYSADLIAEVCNKV</sequence>
<accession>C4LC10</accession>
<keyword id="KW-0963">Cytoplasm</keyword>
<keyword id="KW-0236">DNA replication inhibitor</keyword>
<keyword id="KW-0238">DNA-binding</keyword>
<keyword id="KW-1185">Reference proteome</keyword>
<organism>
    <name type="scientific">Tolumonas auensis (strain DSM 9187 / NBRC 110442 / TA 4)</name>
    <dbReference type="NCBI Taxonomy" id="595494"/>
    <lineage>
        <taxon>Bacteria</taxon>
        <taxon>Pseudomonadati</taxon>
        <taxon>Pseudomonadota</taxon>
        <taxon>Gammaproteobacteria</taxon>
        <taxon>Aeromonadales</taxon>
        <taxon>Aeromonadaceae</taxon>
        <taxon>Tolumonas</taxon>
    </lineage>
</organism>
<protein>
    <recommendedName>
        <fullName evidence="1">Negative modulator of initiation of replication</fullName>
    </recommendedName>
</protein>
<feature type="chain" id="PRO_0000413942" description="Negative modulator of initiation of replication">
    <location>
        <begin position="1"/>
        <end position="170"/>
    </location>
</feature>
<feature type="region of interest" description="Interaction with DNA" evidence="1">
    <location>
        <begin position="139"/>
        <end position="145"/>
    </location>
</feature>
<proteinExistence type="inferred from homology"/>
<evidence type="ECO:0000255" key="1">
    <source>
        <dbReference type="HAMAP-Rule" id="MF_00908"/>
    </source>
</evidence>
<comment type="function">
    <text evidence="1">Negative regulator of replication initiation, which contributes to regulation of DNA replication and ensures that replication initiation occurs exactly once per chromosome per cell cycle. Binds to pairs of hemimethylated GATC sequences in the oriC region, thus preventing assembly of replication proteins and re-initiation at newly replicated origins. Repression is relieved when the region becomes fully methylated.</text>
</comment>
<comment type="subunit">
    <text evidence="1">Homodimer. Polymerizes to form helical filaments.</text>
</comment>
<comment type="subcellular location">
    <subcellularLocation>
        <location evidence="1">Cytoplasm</location>
    </subcellularLocation>
</comment>
<comment type="similarity">
    <text evidence="1">Belongs to the SeqA family.</text>
</comment>
<gene>
    <name evidence="1" type="primary">seqA</name>
    <name type="ordered locus">Tola_0861</name>
</gene>
<dbReference type="EMBL" id="CP001616">
    <property type="protein sequence ID" value="ACQ92489.1"/>
    <property type="molecule type" value="Genomic_DNA"/>
</dbReference>
<dbReference type="RefSeq" id="WP_012729088.1">
    <property type="nucleotide sequence ID" value="NC_012691.1"/>
</dbReference>
<dbReference type="SMR" id="C4LC10"/>
<dbReference type="STRING" id="595494.Tola_0861"/>
<dbReference type="KEGG" id="tau:Tola_0861"/>
<dbReference type="eggNOG" id="COG3057">
    <property type="taxonomic scope" value="Bacteria"/>
</dbReference>
<dbReference type="HOGENOM" id="CLU_099733_0_0_6"/>
<dbReference type="OrthoDB" id="5591069at2"/>
<dbReference type="Proteomes" id="UP000009073">
    <property type="component" value="Chromosome"/>
</dbReference>
<dbReference type="GO" id="GO:0005737">
    <property type="term" value="C:cytoplasm"/>
    <property type="evidence" value="ECO:0007669"/>
    <property type="project" value="UniProtKB-SubCell"/>
</dbReference>
<dbReference type="GO" id="GO:0003677">
    <property type="term" value="F:DNA binding"/>
    <property type="evidence" value="ECO:0007669"/>
    <property type="project" value="UniProtKB-UniRule"/>
</dbReference>
<dbReference type="GO" id="GO:0032297">
    <property type="term" value="P:negative regulation of DNA-templated DNA replication initiation"/>
    <property type="evidence" value="ECO:0007669"/>
    <property type="project" value="UniProtKB-UniRule"/>
</dbReference>
<dbReference type="GO" id="GO:0006355">
    <property type="term" value="P:regulation of DNA-templated transcription"/>
    <property type="evidence" value="ECO:0007669"/>
    <property type="project" value="InterPro"/>
</dbReference>
<dbReference type="Gene3D" id="1.10.1220.10">
    <property type="entry name" value="Met repressor-like"/>
    <property type="match status" value="1"/>
</dbReference>
<dbReference type="Gene3D" id="1.20.1380.10">
    <property type="entry name" value="Replication modulator SeqA, C-terminal DNA-binding domain"/>
    <property type="match status" value="1"/>
</dbReference>
<dbReference type="HAMAP" id="MF_00908">
    <property type="entry name" value="SeqA"/>
    <property type="match status" value="1"/>
</dbReference>
<dbReference type="InterPro" id="IPR013321">
    <property type="entry name" value="Arc_rbn_hlx_hlx"/>
</dbReference>
<dbReference type="InterPro" id="IPR010985">
    <property type="entry name" value="Ribbon_hlx_hlx"/>
</dbReference>
<dbReference type="InterPro" id="IPR005621">
    <property type="entry name" value="SeqA"/>
</dbReference>
<dbReference type="InterPro" id="IPR026577">
    <property type="entry name" value="SeqA_DNA-bd_C"/>
</dbReference>
<dbReference type="InterPro" id="IPR036835">
    <property type="entry name" value="SeqA_DNA-bd_C_sf"/>
</dbReference>
<dbReference type="InterPro" id="IPR033761">
    <property type="entry name" value="SeqA_N"/>
</dbReference>
<dbReference type="NCBIfam" id="NF008389">
    <property type="entry name" value="PRK11187.1"/>
    <property type="match status" value="1"/>
</dbReference>
<dbReference type="Pfam" id="PF03925">
    <property type="entry name" value="SeqA"/>
    <property type="match status" value="1"/>
</dbReference>
<dbReference type="Pfam" id="PF17206">
    <property type="entry name" value="SeqA_N"/>
    <property type="match status" value="1"/>
</dbReference>
<dbReference type="PIRSF" id="PIRSF019401">
    <property type="entry name" value="SeqA"/>
    <property type="match status" value="1"/>
</dbReference>
<dbReference type="SUPFAM" id="SSF82808">
    <property type="entry name" value="Replication modulator SeqA, C-terminal DNA-binding domain"/>
    <property type="match status" value="1"/>
</dbReference>
<dbReference type="SUPFAM" id="SSF47598">
    <property type="entry name" value="Ribbon-helix-helix"/>
    <property type="match status" value="1"/>
</dbReference>
<name>SEQA_TOLAT</name>
<reference key="1">
    <citation type="submission" date="2009-05" db="EMBL/GenBank/DDBJ databases">
        <title>Complete sequence of Tolumonas auensis DSM 9187.</title>
        <authorList>
            <consortium name="US DOE Joint Genome Institute"/>
            <person name="Lucas S."/>
            <person name="Copeland A."/>
            <person name="Lapidus A."/>
            <person name="Glavina del Rio T."/>
            <person name="Tice H."/>
            <person name="Bruce D."/>
            <person name="Goodwin L."/>
            <person name="Pitluck S."/>
            <person name="Chertkov O."/>
            <person name="Brettin T."/>
            <person name="Detter J.C."/>
            <person name="Han C."/>
            <person name="Larimer F."/>
            <person name="Land M."/>
            <person name="Hauser L."/>
            <person name="Kyrpides N."/>
            <person name="Mikhailova N."/>
            <person name="Spring S."/>
            <person name="Beller H."/>
        </authorList>
    </citation>
    <scope>NUCLEOTIDE SEQUENCE [LARGE SCALE GENOMIC DNA]</scope>
    <source>
        <strain>DSM 9187 / NBRC 110442 / TA 4</strain>
    </source>
</reference>